<evidence type="ECO:0000255" key="1">
    <source>
        <dbReference type="HAMAP-Rule" id="MF_03130"/>
    </source>
</evidence>
<evidence type="ECO:0000256" key="2">
    <source>
        <dbReference type="SAM" id="MobiDB-lite"/>
    </source>
</evidence>
<evidence type="ECO:0000269" key="3">
    <source>
    </source>
</evidence>
<gene>
    <name type="ORF">TTHERM_00355780</name>
</gene>
<feature type="chain" id="PRO_0000402081" description="Alpha-tubulin N-acetyltransferase">
    <location>
        <begin position="1"/>
        <end position="399"/>
    </location>
</feature>
<feature type="domain" description="N-acetyltransferase" evidence="1">
    <location>
        <begin position="1"/>
        <end position="178"/>
    </location>
</feature>
<feature type="region of interest" description="Disordered" evidence="2">
    <location>
        <begin position="183"/>
        <end position="223"/>
    </location>
</feature>
<feature type="compositionally biased region" description="Polar residues" evidence="2">
    <location>
        <begin position="183"/>
        <end position="193"/>
    </location>
</feature>
<feature type="compositionally biased region" description="Low complexity" evidence="2">
    <location>
        <begin position="194"/>
        <end position="223"/>
    </location>
</feature>
<feature type="binding site" evidence="1">
    <location>
        <begin position="112"/>
        <end position="125"/>
    </location>
    <ligand>
        <name>acetyl-CoA</name>
        <dbReference type="ChEBI" id="CHEBI:57288"/>
    </ligand>
</feature>
<feature type="binding site" evidence="1">
    <location>
        <begin position="148"/>
        <end position="157"/>
    </location>
    <ligand>
        <name>acetyl-CoA</name>
        <dbReference type="ChEBI" id="CHEBI:57288"/>
    </ligand>
</feature>
<feature type="site" description="Crucial for catalytic activity" evidence="1">
    <location>
        <position position="53"/>
    </location>
</feature>
<keyword id="KW-0012">Acyltransferase</keyword>
<keyword id="KW-1185">Reference proteome</keyword>
<keyword id="KW-0808">Transferase</keyword>
<protein>
    <recommendedName>
        <fullName evidence="1">Alpha-tubulin N-acetyltransferase</fullName>
        <shortName evidence="1">Alpha-TAT</shortName>
        <shortName evidence="1">TAT</shortName>
        <ecNumber evidence="1">2.3.1.108</ecNumber>
    </recommendedName>
    <alternativeName>
        <fullName evidence="1">Acetyltransferase mec-17 homolog</fullName>
    </alternativeName>
</protein>
<sequence length="399" mass="46736">MEFNFIINKLVQLDQQGLGVYIPRASRSKVSSQQEQQLGQVLNTMGERSAIAQGLKQVITNYDKVQGTDQRVYIVAEGRTCQGFLKVGQKNLFYRDMMGNIKEIKPLCVLDFYVHESCQRQGYGKLLFEYMIQCEQTSPEKLAYDRPSPKLIAFLKKHYNLVKYIAQNNNFVVFDQYFRSDASSQNKQNQNTRSYSQPYSDYSSQIPTNYPQQQQQQSNSKSYPYKQENNIDLMQHSSSRNNKEFLNAGRAILSKEEIYKKDNLSQQNIENTLNNINNSQYSTKSQQQQQYQKDYQLDKYENNWGADKNIKKPPFPGQDRQLDKIQQKIQQTERELDVVNQQIIKQRQNLSQDPLTQNHRAQNVYNTNQFGTSPWAQTGFNYYSTSSSNYGNHYTYYKK</sequence>
<name>ATAT_TETTS</name>
<dbReference type="EC" id="2.3.1.108" evidence="1"/>
<dbReference type="EMBL" id="GG662749">
    <property type="protein sequence ID" value="EAR90231.2"/>
    <property type="molecule type" value="Genomic_DNA"/>
</dbReference>
<dbReference type="RefSeq" id="XP_001010476.2">
    <property type="nucleotide sequence ID" value="XM_001010476.2"/>
</dbReference>
<dbReference type="SMR" id="Q22XZ3"/>
<dbReference type="GeneID" id="7837326"/>
<dbReference type="KEGG" id="tet:TTHERM_00355780"/>
<dbReference type="eggNOG" id="KOG4601">
    <property type="taxonomic scope" value="Eukaryota"/>
</dbReference>
<dbReference type="InParanoid" id="Q22XZ3"/>
<dbReference type="OrthoDB" id="447510at2759"/>
<dbReference type="Proteomes" id="UP000009168">
    <property type="component" value="Unassembled WGS sequence"/>
</dbReference>
<dbReference type="GO" id="GO:0005874">
    <property type="term" value="C:microtubule"/>
    <property type="evidence" value="ECO:0007669"/>
    <property type="project" value="InterPro"/>
</dbReference>
<dbReference type="GO" id="GO:0019799">
    <property type="term" value="F:tubulin N-acetyltransferase activity"/>
    <property type="evidence" value="ECO:0000314"/>
    <property type="project" value="UniProtKB"/>
</dbReference>
<dbReference type="GO" id="GO:0070507">
    <property type="term" value="P:regulation of microtubule cytoskeleton organization"/>
    <property type="evidence" value="ECO:0000315"/>
    <property type="project" value="UniProtKB"/>
</dbReference>
<dbReference type="CDD" id="cd04301">
    <property type="entry name" value="NAT_SF"/>
    <property type="match status" value="1"/>
</dbReference>
<dbReference type="FunFam" id="3.40.630.30:FF:000216">
    <property type="entry name" value="Alpha-tubulin N-acetyltransferase"/>
    <property type="match status" value="1"/>
</dbReference>
<dbReference type="Gene3D" id="3.40.630.30">
    <property type="match status" value="1"/>
</dbReference>
<dbReference type="HAMAP" id="MF_03130">
    <property type="entry name" value="mec17"/>
    <property type="match status" value="1"/>
</dbReference>
<dbReference type="InterPro" id="IPR016181">
    <property type="entry name" value="Acyl_CoA_acyltransferase"/>
</dbReference>
<dbReference type="InterPro" id="IPR038746">
    <property type="entry name" value="Atat"/>
</dbReference>
<dbReference type="InterPro" id="IPR007965">
    <property type="entry name" value="GNAT_ATAT"/>
</dbReference>
<dbReference type="PANTHER" id="PTHR12327">
    <property type="entry name" value="ALPHA-TUBULIN N-ACETYLTRANSFERASE 1"/>
    <property type="match status" value="1"/>
</dbReference>
<dbReference type="PANTHER" id="PTHR12327:SF0">
    <property type="entry name" value="ALPHA-TUBULIN N-ACETYLTRANSFERASE 1"/>
    <property type="match status" value="1"/>
</dbReference>
<dbReference type="Pfam" id="PF05301">
    <property type="entry name" value="Acetyltransf_16"/>
    <property type="match status" value="1"/>
</dbReference>
<dbReference type="SUPFAM" id="SSF55729">
    <property type="entry name" value="Acyl-CoA N-acyltransferases (Nat)"/>
    <property type="match status" value="1"/>
</dbReference>
<dbReference type="PROSITE" id="PS51730">
    <property type="entry name" value="GNAT_ATAT"/>
    <property type="match status" value="1"/>
</dbReference>
<proteinExistence type="inferred from homology"/>
<reference key="1">
    <citation type="journal article" date="2006" name="PLoS Biol.">
        <title>Macronuclear genome sequence of the ciliate Tetrahymena thermophila, a model eukaryote.</title>
        <authorList>
            <person name="Eisen J.A."/>
            <person name="Coyne R.S."/>
            <person name="Wu M."/>
            <person name="Wu D."/>
            <person name="Thiagarajan M."/>
            <person name="Wortman J.R."/>
            <person name="Badger J.H."/>
            <person name="Ren Q."/>
            <person name="Amedeo P."/>
            <person name="Jones K.M."/>
            <person name="Tallon L.J."/>
            <person name="Delcher A.L."/>
            <person name="Salzberg S.L."/>
            <person name="Silva J.C."/>
            <person name="Haas B.J."/>
            <person name="Majoros W.H."/>
            <person name="Farzad M."/>
            <person name="Carlton J.M."/>
            <person name="Smith R.K. Jr."/>
            <person name="Garg J."/>
            <person name="Pearlman R.E."/>
            <person name="Karrer K.M."/>
            <person name="Sun L."/>
            <person name="Manning G."/>
            <person name="Elde N.C."/>
            <person name="Turkewitz A.P."/>
            <person name="Asai D.J."/>
            <person name="Wilkes D.E."/>
            <person name="Wang Y."/>
            <person name="Cai H."/>
            <person name="Collins K."/>
            <person name="Stewart B.A."/>
            <person name="Lee S.R."/>
            <person name="Wilamowska K."/>
            <person name="Weinberg Z."/>
            <person name="Ruzzo W.L."/>
            <person name="Wloga D."/>
            <person name="Gaertig J."/>
            <person name="Frankel J."/>
            <person name="Tsao C.-C."/>
            <person name="Gorovsky M.A."/>
            <person name="Keeling P.J."/>
            <person name="Waller R.F."/>
            <person name="Patron N.J."/>
            <person name="Cherry J.M."/>
            <person name="Stover N.A."/>
            <person name="Krieger C.J."/>
            <person name="del Toro C."/>
            <person name="Ryder H.F."/>
            <person name="Williamson S.C."/>
            <person name="Barbeau R.A."/>
            <person name="Hamilton E.P."/>
            <person name="Orias E."/>
        </authorList>
    </citation>
    <scope>NUCLEOTIDE SEQUENCE [LARGE SCALE GENOMIC DNA]</scope>
    <source>
        <strain>SB210</strain>
    </source>
</reference>
<reference key="2">
    <citation type="journal article" date="2010" name="Nature">
        <title>MEC-17 is an alpha-tubulin acetyltransferase.</title>
        <authorList>
            <person name="Akella J.S."/>
            <person name="Wloga D."/>
            <person name="Kim J."/>
            <person name="Starostina N.G."/>
            <person name="Lyons-Abbott S."/>
            <person name="Morrissette N.S."/>
            <person name="Dougan S.T."/>
            <person name="Kipreos E.T."/>
            <person name="Gaertig J."/>
        </authorList>
    </citation>
    <scope>FUNCTION</scope>
</reference>
<comment type="function">
    <text evidence="1 3">Specifically acetylates 'Lys-40' in alpha-tubulin on the lumenal side of microtubules. Promotes microtubule destabilization and accelerates microtubule dynamics; this activity may be independent of acetylation activity. Acetylates alpha-tubulin with a slow enzymatic rate, due to a catalytic site that is not optimized for acetyl transfer. Enters the microtubule through each end and diffuses quickly throughout the lumen of microtubules. Acetylates only long/old microtubules because of its slow acetylation rate since it does not have time to act on dynamically unstable microtubules before the enzyme is released.</text>
</comment>
<comment type="catalytic activity">
    <reaction evidence="1">
        <text>L-lysyl-[alpha-tubulin] + acetyl-CoA = N(6)-acetyl-L-lysyl-[alpha-tubulin] + CoA + H(+)</text>
        <dbReference type="Rhea" id="RHEA:15277"/>
        <dbReference type="Rhea" id="RHEA-COMP:11278"/>
        <dbReference type="Rhea" id="RHEA-COMP:11279"/>
        <dbReference type="ChEBI" id="CHEBI:15378"/>
        <dbReference type="ChEBI" id="CHEBI:29969"/>
        <dbReference type="ChEBI" id="CHEBI:57287"/>
        <dbReference type="ChEBI" id="CHEBI:57288"/>
        <dbReference type="ChEBI" id="CHEBI:61930"/>
        <dbReference type="EC" id="2.3.1.108"/>
    </reaction>
</comment>
<comment type="similarity">
    <text evidence="1">Belongs to the acetyltransferase ATAT1 family.</text>
</comment>
<accession>Q22XZ3</accession>
<organism>
    <name type="scientific">Tetrahymena thermophila (strain SB210)</name>
    <dbReference type="NCBI Taxonomy" id="312017"/>
    <lineage>
        <taxon>Eukaryota</taxon>
        <taxon>Sar</taxon>
        <taxon>Alveolata</taxon>
        <taxon>Ciliophora</taxon>
        <taxon>Intramacronucleata</taxon>
        <taxon>Oligohymenophorea</taxon>
        <taxon>Hymenostomatida</taxon>
        <taxon>Tetrahymenina</taxon>
        <taxon>Tetrahymenidae</taxon>
        <taxon>Tetrahymena</taxon>
    </lineage>
</organism>